<protein>
    <recommendedName>
        <fullName>Proteasome subunit alpha type-3</fullName>
    </recommendedName>
    <alternativeName>
        <fullName>20S proteasome alpha subunit G-1</fullName>
    </alternativeName>
    <alternativeName>
        <fullName>DiDi 17A-2a</fullName>
    </alternativeName>
    <alternativeName>
        <fullName>Proteasome component 8</fullName>
    </alternativeName>
    <alternativeName>
        <fullName>Proteasome subunit alpha type-7</fullName>
    </alternativeName>
</protein>
<comment type="function">
    <text>The proteasome is a multicatalytic proteinase complex which is characterized by its ability to cleave peptides with Arg, Phe, Tyr, Leu, and Glu adjacent to the leaving group at neutral or slightly basic pH. The proteasome has an ATP-dependent proteolytic activity.</text>
</comment>
<comment type="subunit">
    <text evidence="3 5 6">Component of the 20S core complex of the 26S proteasome. The 26S proteasome is composed of a core protease (CP), known as the 20S proteasome, capped at one or both ends by the 19S regulatory particle (RP/PA700). The 20S proteasome core is composed of 28 subunits that are arranged in four stacked rings, resulting in a barrel-shaped structure. The two end rings are each formed by seven alpha subunits, and the two central rings are each formed by seven beta subunits. The catalytic chamber with the active sites is on the inside of the barrel.</text>
</comment>
<comment type="interaction">
    <interactant intactId="EBI-594343">
        <id>O23715</id>
    </interactant>
    <interactant intactId="EBI-25506855">
        <id>O23160</id>
        <label>MYB73</label>
    </interactant>
    <organismsDiffer>false</organismsDiffer>
    <experiments>3</experiments>
</comment>
<comment type="subcellular location">
    <subcellularLocation>
        <location evidence="1">Cytoplasm</location>
    </subcellularLocation>
    <subcellularLocation>
        <location evidence="1">Nucleus</location>
    </subcellularLocation>
</comment>
<comment type="tissue specificity">
    <text evidence="4 7">Ubiquitous low levels.</text>
</comment>
<comment type="induction">
    <text evidence="4">Induced by the endoparasitic nematode M.incognita. Levels increase after infection in both giants cells and endodermal cells of galls. Later confined to giant cells at high levels.</text>
</comment>
<comment type="disruption phenotype">
    <text evidence="6">Lethal due to defect in male gametogenesis.</text>
</comment>
<comment type="similarity">
    <text evidence="2">Belongs to the peptidase T1A family.</text>
</comment>
<proteinExistence type="evidence at protein level"/>
<feature type="initiator methionine" description="Removed" evidence="9">
    <location>
        <position position="1"/>
    </location>
</feature>
<feature type="chain" id="PRO_0000124098" description="Proteasome subunit alpha type-3">
    <location>
        <begin position="2"/>
        <end position="249"/>
    </location>
</feature>
<feature type="modified residue" description="N-acetylserine" evidence="9">
    <location>
        <position position="2"/>
    </location>
</feature>
<feature type="modified residue" description="O-acetylserine" evidence="6">
    <location>
        <position position="214"/>
    </location>
</feature>
<feature type="modified residue" description="O-acetylserine" evidence="6">
    <location>
        <position position="220"/>
    </location>
</feature>
<feature type="cross-link" description="Glycyl lysine isopeptide (Lys-Gly) (interchain with G-Cter in ubiquitin)" evidence="6">
    <location>
        <position position="221"/>
    </location>
</feature>
<feature type="sequence conflict" description="In Ref. 1; CAA74027." evidence="8" ref="1">
    <original>R</original>
    <variation>G</variation>
    <location>
        <position position="20"/>
    </location>
</feature>
<dbReference type="EMBL" id="Y13693">
    <property type="protein sequence ID" value="CAA74027.1"/>
    <property type="molecule type" value="mRNA"/>
</dbReference>
<dbReference type="EMBL" id="AF043528">
    <property type="protein sequence ID" value="AAC32064.1"/>
    <property type="molecule type" value="mRNA"/>
</dbReference>
<dbReference type="EMBL" id="AC005623">
    <property type="protein sequence ID" value="AAC77860.1"/>
    <property type="molecule type" value="Genomic_DNA"/>
</dbReference>
<dbReference type="EMBL" id="CP002685">
    <property type="protein sequence ID" value="AEC07923.1"/>
    <property type="molecule type" value="Genomic_DNA"/>
</dbReference>
<dbReference type="EMBL" id="AF375455">
    <property type="protein sequence ID" value="AAK53039.1"/>
    <property type="molecule type" value="mRNA"/>
</dbReference>
<dbReference type="EMBL" id="AY124806">
    <property type="protein sequence ID" value="AAM70515.1"/>
    <property type="molecule type" value="mRNA"/>
</dbReference>
<dbReference type="EMBL" id="AY088609">
    <property type="protein sequence ID" value="AAM66932.1"/>
    <property type="molecule type" value="mRNA"/>
</dbReference>
<dbReference type="EMBL" id="AK175942">
    <property type="protein sequence ID" value="BAD43705.1"/>
    <property type="molecule type" value="mRNA"/>
</dbReference>
<dbReference type="EMBL" id="AK175949">
    <property type="protein sequence ID" value="BAD43712.1"/>
    <property type="molecule type" value="mRNA"/>
</dbReference>
<dbReference type="EMBL" id="AJ286351">
    <property type="protein sequence ID" value="CAB71015.1"/>
    <property type="molecule type" value="mRNA"/>
</dbReference>
<dbReference type="PIR" id="G84667">
    <property type="entry name" value="G84667"/>
</dbReference>
<dbReference type="RefSeq" id="NP_180270.1">
    <property type="nucleotide sequence ID" value="NM_128260.5"/>
</dbReference>
<dbReference type="SMR" id="O23715"/>
<dbReference type="BioGRID" id="2596">
    <property type="interactions" value="76"/>
</dbReference>
<dbReference type="FunCoup" id="O23715">
    <property type="interactions" value="4813"/>
</dbReference>
<dbReference type="IntAct" id="O23715">
    <property type="interactions" value="4"/>
</dbReference>
<dbReference type="STRING" id="3702.O23715"/>
<dbReference type="iPTMnet" id="O23715"/>
<dbReference type="MetOSite" id="O23715"/>
<dbReference type="PaxDb" id="3702-AT2G27020.1"/>
<dbReference type="ProteomicsDB" id="226304"/>
<dbReference type="EnsemblPlants" id="AT2G27020.1">
    <property type="protein sequence ID" value="AT2G27020.1"/>
    <property type="gene ID" value="AT2G27020"/>
</dbReference>
<dbReference type="GeneID" id="817244"/>
<dbReference type="Gramene" id="AT2G27020.1">
    <property type="protein sequence ID" value="AT2G27020.1"/>
    <property type="gene ID" value="AT2G27020"/>
</dbReference>
<dbReference type="KEGG" id="ath:AT2G27020"/>
<dbReference type="Araport" id="AT2G27020"/>
<dbReference type="TAIR" id="AT2G27020">
    <property type="gene designation" value="PAG1"/>
</dbReference>
<dbReference type="eggNOG" id="KOG0184">
    <property type="taxonomic scope" value="Eukaryota"/>
</dbReference>
<dbReference type="HOGENOM" id="CLU_035750_0_0_1"/>
<dbReference type="InParanoid" id="O23715"/>
<dbReference type="OMA" id="RVSMYMH"/>
<dbReference type="OrthoDB" id="431557at2759"/>
<dbReference type="PhylomeDB" id="O23715"/>
<dbReference type="PRO" id="PR:O23715"/>
<dbReference type="Proteomes" id="UP000006548">
    <property type="component" value="Chromosome 2"/>
</dbReference>
<dbReference type="ExpressionAtlas" id="O23715">
    <property type="expression patterns" value="baseline and differential"/>
</dbReference>
<dbReference type="GO" id="GO:0048046">
    <property type="term" value="C:apoplast"/>
    <property type="evidence" value="ECO:0007005"/>
    <property type="project" value="TAIR"/>
</dbReference>
<dbReference type="GO" id="GO:0005829">
    <property type="term" value="C:cytosol"/>
    <property type="evidence" value="ECO:0007005"/>
    <property type="project" value="TAIR"/>
</dbReference>
<dbReference type="GO" id="GO:0005634">
    <property type="term" value="C:nucleus"/>
    <property type="evidence" value="ECO:0007005"/>
    <property type="project" value="TAIR"/>
</dbReference>
<dbReference type="GO" id="GO:0005777">
    <property type="term" value="C:peroxisome"/>
    <property type="evidence" value="ECO:0007005"/>
    <property type="project" value="TAIR"/>
</dbReference>
<dbReference type="GO" id="GO:0000325">
    <property type="term" value="C:plant-type vacuole"/>
    <property type="evidence" value="ECO:0007005"/>
    <property type="project" value="TAIR"/>
</dbReference>
<dbReference type="GO" id="GO:0000502">
    <property type="term" value="C:proteasome complex"/>
    <property type="evidence" value="ECO:0000314"/>
    <property type="project" value="TAIR"/>
</dbReference>
<dbReference type="GO" id="GO:0019773">
    <property type="term" value="C:proteasome core complex, alpha-subunit complex"/>
    <property type="evidence" value="ECO:0000250"/>
    <property type="project" value="UniProtKB"/>
</dbReference>
<dbReference type="GO" id="GO:0005773">
    <property type="term" value="C:vacuole"/>
    <property type="evidence" value="ECO:0007005"/>
    <property type="project" value="TAIR"/>
</dbReference>
<dbReference type="GO" id="GO:0006511">
    <property type="term" value="P:ubiquitin-dependent protein catabolic process"/>
    <property type="evidence" value="ECO:0007669"/>
    <property type="project" value="InterPro"/>
</dbReference>
<dbReference type="CDD" id="cd03751">
    <property type="entry name" value="proteasome_alpha_type_3"/>
    <property type="match status" value="1"/>
</dbReference>
<dbReference type="FunFam" id="3.60.20.10:FF:000007">
    <property type="entry name" value="Proteasome subunit alpha type"/>
    <property type="match status" value="1"/>
</dbReference>
<dbReference type="Gene3D" id="3.60.20.10">
    <property type="entry name" value="Glutamine Phosphoribosylpyrophosphate, subunit 1, domain 1"/>
    <property type="match status" value="1"/>
</dbReference>
<dbReference type="InterPro" id="IPR029055">
    <property type="entry name" value="Ntn_hydrolases_N"/>
</dbReference>
<dbReference type="InterPro" id="IPR050115">
    <property type="entry name" value="Proteasome_alpha"/>
</dbReference>
<dbReference type="InterPro" id="IPR023332">
    <property type="entry name" value="Proteasome_alpha-type"/>
</dbReference>
<dbReference type="InterPro" id="IPR000426">
    <property type="entry name" value="Proteasome_asu_N"/>
</dbReference>
<dbReference type="InterPro" id="IPR001353">
    <property type="entry name" value="Proteasome_sua/b"/>
</dbReference>
<dbReference type="PANTHER" id="PTHR11599">
    <property type="entry name" value="PROTEASOME SUBUNIT ALPHA/BETA"/>
    <property type="match status" value="1"/>
</dbReference>
<dbReference type="Pfam" id="PF00227">
    <property type="entry name" value="Proteasome"/>
    <property type="match status" value="1"/>
</dbReference>
<dbReference type="Pfam" id="PF10584">
    <property type="entry name" value="Proteasome_A_N"/>
    <property type="match status" value="1"/>
</dbReference>
<dbReference type="SMART" id="SM00948">
    <property type="entry name" value="Proteasome_A_N"/>
    <property type="match status" value="1"/>
</dbReference>
<dbReference type="SUPFAM" id="SSF56235">
    <property type="entry name" value="N-terminal nucleophile aminohydrolases (Ntn hydrolases)"/>
    <property type="match status" value="1"/>
</dbReference>
<dbReference type="PROSITE" id="PS00388">
    <property type="entry name" value="PROTEASOME_ALPHA_1"/>
    <property type="match status" value="1"/>
</dbReference>
<dbReference type="PROSITE" id="PS51475">
    <property type="entry name" value="PROTEASOME_ALPHA_2"/>
    <property type="match status" value="1"/>
</dbReference>
<gene>
    <name type="primary">PAG1</name>
    <name type="synonym">PRC8</name>
    <name type="ordered locus">At2g27020</name>
    <name type="ORF">T20P8.7</name>
</gene>
<organism>
    <name type="scientific">Arabidopsis thaliana</name>
    <name type="common">Mouse-ear cress</name>
    <dbReference type="NCBI Taxonomy" id="3702"/>
    <lineage>
        <taxon>Eukaryota</taxon>
        <taxon>Viridiplantae</taxon>
        <taxon>Streptophyta</taxon>
        <taxon>Embryophyta</taxon>
        <taxon>Tracheophyta</taxon>
        <taxon>Spermatophyta</taxon>
        <taxon>Magnoliopsida</taxon>
        <taxon>eudicotyledons</taxon>
        <taxon>Gunneridae</taxon>
        <taxon>Pentapetalae</taxon>
        <taxon>rosids</taxon>
        <taxon>malvids</taxon>
        <taxon>Brassicales</taxon>
        <taxon>Brassicaceae</taxon>
        <taxon>Camelineae</taxon>
        <taxon>Arabidopsis</taxon>
    </lineage>
</organism>
<name>PSA3_ARATH</name>
<reference key="1">
    <citation type="journal article" date="1997" name="FEBS Lett.">
        <title>The 20S proteasome gene family in Arabidopsis thaliana.</title>
        <authorList>
            <person name="Parmentier Y."/>
            <person name="Bouchez D."/>
            <person name="Fleck J."/>
            <person name="Genschik P."/>
        </authorList>
    </citation>
    <scope>NUCLEOTIDE SEQUENCE [MRNA]</scope>
    <source>
        <strain>cv. Columbia</strain>
    </source>
</reference>
<reference key="2">
    <citation type="journal article" date="1998" name="Genetics">
        <title>Molecular organization of the 20S proteasome gene family from Arabidopsis thaliana.</title>
        <authorList>
            <person name="Fu H."/>
            <person name="Doelling J.H."/>
            <person name="Arendt C.S."/>
            <person name="Hochstrasser M."/>
            <person name="Vierstra R.D."/>
        </authorList>
    </citation>
    <scope>NUCLEOTIDE SEQUENCE [MRNA]</scope>
    <scope>TISSUE SPECIFICITY</scope>
    <scope>GENE FAMILY</scope>
    <scope>NOMENCLATURE</scope>
    <source>
        <strain>cv. Columbia</strain>
    </source>
</reference>
<reference key="3">
    <citation type="journal article" date="1999" name="Nature">
        <title>Sequence and analysis of chromosome 2 of the plant Arabidopsis thaliana.</title>
        <authorList>
            <person name="Lin X."/>
            <person name="Kaul S."/>
            <person name="Rounsley S.D."/>
            <person name="Shea T.P."/>
            <person name="Benito M.-I."/>
            <person name="Town C.D."/>
            <person name="Fujii C.Y."/>
            <person name="Mason T.M."/>
            <person name="Bowman C.L."/>
            <person name="Barnstead M.E."/>
            <person name="Feldblyum T.V."/>
            <person name="Buell C.R."/>
            <person name="Ketchum K.A."/>
            <person name="Lee J.J."/>
            <person name="Ronning C.M."/>
            <person name="Koo H.L."/>
            <person name="Moffat K.S."/>
            <person name="Cronin L.A."/>
            <person name="Shen M."/>
            <person name="Pai G."/>
            <person name="Van Aken S."/>
            <person name="Umayam L."/>
            <person name="Tallon L.J."/>
            <person name="Gill J.E."/>
            <person name="Adams M.D."/>
            <person name="Carrera A.J."/>
            <person name="Creasy T.H."/>
            <person name="Goodman H.M."/>
            <person name="Somerville C.R."/>
            <person name="Copenhaver G.P."/>
            <person name="Preuss D."/>
            <person name="Nierman W.C."/>
            <person name="White O."/>
            <person name="Eisen J.A."/>
            <person name="Salzberg S.L."/>
            <person name="Fraser C.M."/>
            <person name="Venter J.C."/>
        </authorList>
    </citation>
    <scope>NUCLEOTIDE SEQUENCE [LARGE SCALE GENOMIC DNA]</scope>
    <source>
        <strain>cv. Columbia</strain>
    </source>
</reference>
<reference key="4">
    <citation type="journal article" date="2017" name="Plant J.">
        <title>Araport11: a complete reannotation of the Arabidopsis thaliana reference genome.</title>
        <authorList>
            <person name="Cheng C.Y."/>
            <person name="Krishnakumar V."/>
            <person name="Chan A.P."/>
            <person name="Thibaud-Nissen F."/>
            <person name="Schobel S."/>
            <person name="Town C.D."/>
        </authorList>
    </citation>
    <scope>GENOME REANNOTATION</scope>
    <source>
        <strain>cv. Columbia</strain>
    </source>
</reference>
<reference key="5">
    <citation type="journal article" date="2003" name="Science">
        <title>Empirical analysis of transcriptional activity in the Arabidopsis genome.</title>
        <authorList>
            <person name="Yamada K."/>
            <person name="Lim J."/>
            <person name="Dale J.M."/>
            <person name="Chen H."/>
            <person name="Shinn P."/>
            <person name="Palm C.J."/>
            <person name="Southwick A.M."/>
            <person name="Wu H.C."/>
            <person name="Kim C.J."/>
            <person name="Nguyen M."/>
            <person name="Pham P.K."/>
            <person name="Cheuk R.F."/>
            <person name="Karlin-Newmann G."/>
            <person name="Liu S.X."/>
            <person name="Lam B."/>
            <person name="Sakano H."/>
            <person name="Wu T."/>
            <person name="Yu G."/>
            <person name="Miranda M."/>
            <person name="Quach H.L."/>
            <person name="Tripp M."/>
            <person name="Chang C.H."/>
            <person name="Lee J.M."/>
            <person name="Toriumi M.J."/>
            <person name="Chan M.M."/>
            <person name="Tang C.C."/>
            <person name="Onodera C.S."/>
            <person name="Deng J.M."/>
            <person name="Akiyama K."/>
            <person name="Ansari Y."/>
            <person name="Arakawa T."/>
            <person name="Banh J."/>
            <person name="Banno F."/>
            <person name="Bowser L."/>
            <person name="Brooks S.Y."/>
            <person name="Carninci P."/>
            <person name="Chao Q."/>
            <person name="Choy N."/>
            <person name="Enju A."/>
            <person name="Goldsmith A.D."/>
            <person name="Gurjal M."/>
            <person name="Hansen N.F."/>
            <person name="Hayashizaki Y."/>
            <person name="Johnson-Hopson C."/>
            <person name="Hsuan V.W."/>
            <person name="Iida K."/>
            <person name="Karnes M."/>
            <person name="Khan S."/>
            <person name="Koesema E."/>
            <person name="Ishida J."/>
            <person name="Jiang P.X."/>
            <person name="Jones T."/>
            <person name="Kawai J."/>
            <person name="Kamiya A."/>
            <person name="Meyers C."/>
            <person name="Nakajima M."/>
            <person name="Narusaka M."/>
            <person name="Seki M."/>
            <person name="Sakurai T."/>
            <person name="Satou M."/>
            <person name="Tamse R."/>
            <person name="Vaysberg M."/>
            <person name="Wallender E.K."/>
            <person name="Wong C."/>
            <person name="Yamamura Y."/>
            <person name="Yuan S."/>
            <person name="Shinozaki K."/>
            <person name="Davis R.W."/>
            <person name="Theologis A."/>
            <person name="Ecker J.R."/>
        </authorList>
    </citation>
    <scope>NUCLEOTIDE SEQUENCE [LARGE SCALE MRNA]</scope>
    <source>
        <strain>cv. Columbia</strain>
    </source>
</reference>
<reference key="6">
    <citation type="submission" date="2002-03" db="EMBL/GenBank/DDBJ databases">
        <title>Full-length cDNA from Arabidopsis thaliana.</title>
        <authorList>
            <person name="Brover V.V."/>
            <person name="Troukhan M.E."/>
            <person name="Alexandrov N.A."/>
            <person name="Lu Y.-P."/>
            <person name="Flavell R.B."/>
            <person name="Feldmann K.A."/>
        </authorList>
    </citation>
    <scope>NUCLEOTIDE SEQUENCE [LARGE SCALE MRNA]</scope>
</reference>
<reference key="7">
    <citation type="submission" date="2004-09" db="EMBL/GenBank/DDBJ databases">
        <title>Large-scale analysis of RIKEN Arabidopsis full-length (RAFL) cDNAs.</title>
        <authorList>
            <person name="Totoki Y."/>
            <person name="Seki M."/>
            <person name="Ishida J."/>
            <person name="Nakajima M."/>
            <person name="Enju A."/>
            <person name="Kamiya A."/>
            <person name="Narusaka M."/>
            <person name="Shin-i T."/>
            <person name="Nakagawa M."/>
            <person name="Sakamoto N."/>
            <person name="Oishi K."/>
            <person name="Kohara Y."/>
            <person name="Kobayashi M."/>
            <person name="Toyoda A."/>
            <person name="Sakaki Y."/>
            <person name="Sakurai T."/>
            <person name="Iida K."/>
            <person name="Akiyama K."/>
            <person name="Satou M."/>
            <person name="Toyoda T."/>
            <person name="Konagaya A."/>
            <person name="Carninci P."/>
            <person name="Kawai J."/>
            <person name="Hayashizaki Y."/>
            <person name="Shinozaki K."/>
        </authorList>
    </citation>
    <scope>NUCLEOTIDE SEQUENCE [LARGE SCALE MRNA] OF 211-249</scope>
    <source>
        <strain>cv. Columbia</strain>
    </source>
</reference>
<reference key="8">
    <citation type="journal article" date="2001" name="Mol. Plant Microbe Interact.">
        <title>Arabidopsis thaliana genes expressed in the early compatible interaction with root-knot nematodes.</title>
        <authorList>
            <person name="Vercauteren I."/>
            <person name="van der Schueren E."/>
            <person name="Van Montagu M."/>
            <person name="Gheysen G."/>
        </authorList>
    </citation>
    <scope>NUCLEOTIDE SEQUENCE [MRNA] OF 219-249</scope>
    <scope>TISSUE SPECIFICITY</scope>
    <scope>INDUCTION</scope>
    <source>
        <strain>cv. Columbia</strain>
        <tissue>Root</tissue>
    </source>
</reference>
<reference key="9">
    <citation type="journal article" date="1999" name="Mol. Biol. Rep.">
        <title>Structure and functional analyses of the 26S proteasome subunits from plants.</title>
        <authorList>
            <person name="Fu H."/>
            <person name="Girod P.-A."/>
            <person name="Doelling J.H."/>
            <person name="van Nocker S."/>
            <person name="Hochstrasser M."/>
            <person name="Finley D."/>
            <person name="Vierstra R.D."/>
        </authorList>
    </citation>
    <scope>SUBUNIT</scope>
</reference>
<reference key="10">
    <citation type="journal article" date="2004" name="J. Biol. Chem.">
        <title>Purification of the Arabidopsis 26 S proteasome: biochemical and molecular analyses revealed the presence of multiple isoforms.</title>
        <authorList>
            <person name="Yang P."/>
            <person name="Fu H."/>
            <person name="Walker J."/>
            <person name="Papa C.M."/>
            <person name="Smalle J."/>
            <person name="Ju Y.-M."/>
            <person name="Vierstra R.D."/>
        </authorList>
    </citation>
    <scope>SUBUNIT</scope>
    <scope>IDENTIFICATION BY MASS SPECTROMETRY</scope>
</reference>
<reference key="11">
    <citation type="journal article" date="2010" name="J. Biol. Chem.">
        <title>Affinity purification of the Arabidopsis 26 S proteasome reveals a diverse array of plant proteolytic complexes.</title>
        <authorList>
            <person name="Book A.J."/>
            <person name="Gladman N.P."/>
            <person name="Lee S.S."/>
            <person name="Scalf M."/>
            <person name="Smith L.M."/>
            <person name="Vierstra R.D."/>
        </authorList>
    </citation>
    <scope>IDENTIFICATION BY MASS SPECTROMETRY</scope>
    <scope>CHARACTERIZATION OF THE 26S PROTEASOME COMPLEX</scope>
    <scope>SUBUNIT</scope>
    <scope>DISRUPTION PHENOTYPE</scope>
    <scope>ACETYLATION AT SER-214 AND SER-220</scope>
    <scope>UBIQUITINATION AT LYS-221</scope>
</reference>
<reference key="12">
    <citation type="journal article" date="2012" name="Mol. Cell. Proteomics">
        <title>Comparative large-scale characterisation of plant vs. mammal proteins reveals similar and idiosyncratic N-alpha acetylation features.</title>
        <authorList>
            <person name="Bienvenut W.V."/>
            <person name="Sumpton D."/>
            <person name="Martinez A."/>
            <person name="Lilla S."/>
            <person name="Espagne C."/>
            <person name="Meinnel T."/>
            <person name="Giglione C."/>
        </authorList>
    </citation>
    <scope>ACETYLATION [LARGE SCALE ANALYSIS] AT SER-2</scope>
    <scope>CLEAVAGE OF INITIATOR METHIONINE [LARGE SCALE ANALYSIS]</scope>
    <scope>IDENTIFICATION BY MASS SPECTROMETRY [LARGE SCALE ANALYSIS]</scope>
</reference>
<sequence length="249" mass="27377">MSSIGTGYDLSVTTFSPDGRVFQIEYAAKAVDNSGTVVGIKCKDGIVMGVEKLIASKMMLPGSNRRIHSVHRHAGMAVAGLAADGRQIVARAKSEARSYESVYGDAVPVKELSERVASYVHLCTLYWWLRPFGCGVILGGYDRDGPQLYMIEPSGISYRYFGAAIGKGKQAAKTEIEKLNLSEMTCKEGVIEVAKIIYKLHDEAKDKAFELEMSWICEESKREHQKVPDDLLEEAKTAAKTALEEMDAD</sequence>
<keyword id="KW-0007">Acetylation</keyword>
<keyword id="KW-0963">Cytoplasm</keyword>
<keyword id="KW-1017">Isopeptide bond</keyword>
<keyword id="KW-0539">Nucleus</keyword>
<keyword id="KW-0647">Proteasome</keyword>
<keyword id="KW-1185">Reference proteome</keyword>
<keyword id="KW-0832">Ubl conjugation</keyword>
<evidence type="ECO:0000250" key="1"/>
<evidence type="ECO:0000255" key="2">
    <source>
        <dbReference type="PROSITE-ProRule" id="PRU00808"/>
    </source>
</evidence>
<evidence type="ECO:0000269" key="3">
    <source>
    </source>
</evidence>
<evidence type="ECO:0000269" key="4">
    <source>
    </source>
</evidence>
<evidence type="ECO:0000269" key="5">
    <source>
    </source>
</evidence>
<evidence type="ECO:0000269" key="6">
    <source>
    </source>
</evidence>
<evidence type="ECO:0000269" key="7">
    <source>
    </source>
</evidence>
<evidence type="ECO:0000305" key="8"/>
<evidence type="ECO:0007744" key="9">
    <source>
    </source>
</evidence>
<accession>O23715</accession>
<accession>O81151</accession>
<accession>Q680B8</accession>
<accession>Q9M3S3</accession>